<sequence>MARPLRAARLPPPLLLLLAAGASLGAYAVGVDEPGPEGLTSTSLLDLLLPTDFEPLDSEEPSEAMGLDAGLAPGSGFPSEDSEESRLLQPPQYFWEEEELNGSSLDLGPTADYVFPDLTEKVASMEDPGQAPDLPNLPSILPKMDLAEPPWHMPLQEEEEEEEEEEEEREEEEREKEAEEEEEEEELLPVSGSPGATAQAHAPSPSTSSSTSSQSPGATRHRQEDSGDQATSGMEVESSVKPTLSVPSVTPSTVAPGVQNYSQESGGTEWPTGGLGVQSEVPQGAGEGATVGAADFDGQQGALPSSSLPQTVPPSGTEVPSEGPLYPRIPDSLPPGPQDTESTPSSATWGQEGLSEQPLEGQAAEAHSLTPWDSTQVICKDWSNLAGKSYIILNMTQNIDCEVFRRHRGLRLLALVEEVLPRHRSGHRGDWHISLSKPSEKEQHLLMTLVGEQGVVPTQDVLSMLSGIRRSLEEIGIQNYSTTSSCQARATQVRSDYGTLFVVLVIIGVICFIIIVLGLLYNCWQRRMPKLKHVSHGEELRFVENGCHDNPTLDVASDSQSEMQEKQPSLNGGAINGPSSWSALMGSKRDPEDSDVFEEDTHL</sequence>
<name>PDXL2_MOUSE</name>
<organism>
    <name type="scientific">Mus musculus</name>
    <name type="common">Mouse</name>
    <dbReference type="NCBI Taxonomy" id="10090"/>
    <lineage>
        <taxon>Eukaryota</taxon>
        <taxon>Metazoa</taxon>
        <taxon>Chordata</taxon>
        <taxon>Craniata</taxon>
        <taxon>Vertebrata</taxon>
        <taxon>Euteleostomi</taxon>
        <taxon>Mammalia</taxon>
        <taxon>Eutheria</taxon>
        <taxon>Euarchontoglires</taxon>
        <taxon>Glires</taxon>
        <taxon>Rodentia</taxon>
        <taxon>Myomorpha</taxon>
        <taxon>Muroidea</taxon>
        <taxon>Muridae</taxon>
        <taxon>Murinae</taxon>
        <taxon>Mus</taxon>
        <taxon>Mus</taxon>
    </lineage>
</organism>
<comment type="function">
    <text evidence="1">Acts as a ligand for vascular selectins. Mediates rapid rolling of leukocytes over vascular surfaces through high affinity divalent cation-dependent interactions with E-, P- and L-selectins.</text>
</comment>
<comment type="subunit">
    <text evidence="1">Homodimer; disulfide-linked. Interacts with SELL, SELE and SELP.</text>
</comment>
<comment type="subcellular location">
    <subcellularLocation>
        <location evidence="6">Membrane</location>
        <topology evidence="6">Single-pass type I membrane protein</topology>
    </subcellularLocation>
</comment>
<comment type="alternative products">
    <event type="alternative splicing"/>
    <isoform>
        <id>Q8CAE9-1</id>
        <name>1</name>
        <sequence type="displayed"/>
    </isoform>
    <isoform>
        <id>Q8CAE9-2</id>
        <name>2</name>
        <sequence type="described" ref="VSP_020878 VSP_020879"/>
    </isoform>
    <isoform>
        <id>Q8CAE9-3</id>
        <name>3</name>
        <sequence type="described" ref="VSP_020877"/>
    </isoform>
</comment>
<comment type="PTM">
    <text evidence="1">Glycosylated; contains chondroitin sulfate. Displays sialylated O-linked oligosaccharides.</text>
</comment>
<comment type="PTM">
    <text evidence="1">Sulfation is necessary for interaction with SELL. Sialylated O-linked oligosaccharides are necessary for interaction with SELL, SELE and SELP.</text>
</comment>
<comment type="similarity">
    <text evidence="6">Belongs to the podocalyxin family.</text>
</comment>
<reference key="1">
    <citation type="journal article" date="2005" name="Science">
        <title>The transcriptional landscape of the mammalian genome.</title>
        <authorList>
            <person name="Carninci P."/>
            <person name="Kasukawa T."/>
            <person name="Katayama S."/>
            <person name="Gough J."/>
            <person name="Frith M.C."/>
            <person name="Maeda N."/>
            <person name="Oyama R."/>
            <person name="Ravasi T."/>
            <person name="Lenhard B."/>
            <person name="Wells C."/>
            <person name="Kodzius R."/>
            <person name="Shimokawa K."/>
            <person name="Bajic V.B."/>
            <person name="Brenner S.E."/>
            <person name="Batalov S."/>
            <person name="Forrest A.R."/>
            <person name="Zavolan M."/>
            <person name="Davis M.J."/>
            <person name="Wilming L.G."/>
            <person name="Aidinis V."/>
            <person name="Allen J.E."/>
            <person name="Ambesi-Impiombato A."/>
            <person name="Apweiler R."/>
            <person name="Aturaliya R.N."/>
            <person name="Bailey T.L."/>
            <person name="Bansal M."/>
            <person name="Baxter L."/>
            <person name="Beisel K.W."/>
            <person name="Bersano T."/>
            <person name="Bono H."/>
            <person name="Chalk A.M."/>
            <person name="Chiu K.P."/>
            <person name="Choudhary V."/>
            <person name="Christoffels A."/>
            <person name="Clutterbuck D.R."/>
            <person name="Crowe M.L."/>
            <person name="Dalla E."/>
            <person name="Dalrymple B.P."/>
            <person name="de Bono B."/>
            <person name="Della Gatta G."/>
            <person name="di Bernardo D."/>
            <person name="Down T."/>
            <person name="Engstrom P."/>
            <person name="Fagiolini M."/>
            <person name="Faulkner G."/>
            <person name="Fletcher C.F."/>
            <person name="Fukushima T."/>
            <person name="Furuno M."/>
            <person name="Futaki S."/>
            <person name="Gariboldi M."/>
            <person name="Georgii-Hemming P."/>
            <person name="Gingeras T.R."/>
            <person name="Gojobori T."/>
            <person name="Green R.E."/>
            <person name="Gustincich S."/>
            <person name="Harbers M."/>
            <person name="Hayashi Y."/>
            <person name="Hensch T.K."/>
            <person name="Hirokawa N."/>
            <person name="Hill D."/>
            <person name="Huminiecki L."/>
            <person name="Iacono M."/>
            <person name="Ikeo K."/>
            <person name="Iwama A."/>
            <person name="Ishikawa T."/>
            <person name="Jakt M."/>
            <person name="Kanapin A."/>
            <person name="Katoh M."/>
            <person name="Kawasawa Y."/>
            <person name="Kelso J."/>
            <person name="Kitamura H."/>
            <person name="Kitano H."/>
            <person name="Kollias G."/>
            <person name="Krishnan S.P."/>
            <person name="Kruger A."/>
            <person name="Kummerfeld S.K."/>
            <person name="Kurochkin I.V."/>
            <person name="Lareau L.F."/>
            <person name="Lazarevic D."/>
            <person name="Lipovich L."/>
            <person name="Liu J."/>
            <person name="Liuni S."/>
            <person name="McWilliam S."/>
            <person name="Madan Babu M."/>
            <person name="Madera M."/>
            <person name="Marchionni L."/>
            <person name="Matsuda H."/>
            <person name="Matsuzawa S."/>
            <person name="Miki H."/>
            <person name="Mignone F."/>
            <person name="Miyake S."/>
            <person name="Morris K."/>
            <person name="Mottagui-Tabar S."/>
            <person name="Mulder N."/>
            <person name="Nakano N."/>
            <person name="Nakauchi H."/>
            <person name="Ng P."/>
            <person name="Nilsson R."/>
            <person name="Nishiguchi S."/>
            <person name="Nishikawa S."/>
            <person name="Nori F."/>
            <person name="Ohara O."/>
            <person name="Okazaki Y."/>
            <person name="Orlando V."/>
            <person name="Pang K.C."/>
            <person name="Pavan W.J."/>
            <person name="Pavesi G."/>
            <person name="Pesole G."/>
            <person name="Petrovsky N."/>
            <person name="Piazza S."/>
            <person name="Reed J."/>
            <person name="Reid J.F."/>
            <person name="Ring B.Z."/>
            <person name="Ringwald M."/>
            <person name="Rost B."/>
            <person name="Ruan Y."/>
            <person name="Salzberg S.L."/>
            <person name="Sandelin A."/>
            <person name="Schneider C."/>
            <person name="Schoenbach C."/>
            <person name="Sekiguchi K."/>
            <person name="Semple C.A."/>
            <person name="Seno S."/>
            <person name="Sessa L."/>
            <person name="Sheng Y."/>
            <person name="Shibata Y."/>
            <person name="Shimada H."/>
            <person name="Shimada K."/>
            <person name="Silva D."/>
            <person name="Sinclair B."/>
            <person name="Sperling S."/>
            <person name="Stupka E."/>
            <person name="Sugiura K."/>
            <person name="Sultana R."/>
            <person name="Takenaka Y."/>
            <person name="Taki K."/>
            <person name="Tammoja K."/>
            <person name="Tan S.L."/>
            <person name="Tang S."/>
            <person name="Taylor M.S."/>
            <person name="Tegner J."/>
            <person name="Teichmann S.A."/>
            <person name="Ueda H.R."/>
            <person name="van Nimwegen E."/>
            <person name="Verardo R."/>
            <person name="Wei C.L."/>
            <person name="Yagi K."/>
            <person name="Yamanishi H."/>
            <person name="Zabarovsky E."/>
            <person name="Zhu S."/>
            <person name="Zimmer A."/>
            <person name="Hide W."/>
            <person name="Bult C."/>
            <person name="Grimmond S.M."/>
            <person name="Teasdale R.D."/>
            <person name="Liu E.T."/>
            <person name="Brusic V."/>
            <person name="Quackenbush J."/>
            <person name="Wahlestedt C."/>
            <person name="Mattick J.S."/>
            <person name="Hume D.A."/>
            <person name="Kai C."/>
            <person name="Sasaki D."/>
            <person name="Tomaru Y."/>
            <person name="Fukuda S."/>
            <person name="Kanamori-Katayama M."/>
            <person name="Suzuki M."/>
            <person name="Aoki J."/>
            <person name="Arakawa T."/>
            <person name="Iida J."/>
            <person name="Imamura K."/>
            <person name="Itoh M."/>
            <person name="Kato T."/>
            <person name="Kawaji H."/>
            <person name="Kawagashira N."/>
            <person name="Kawashima T."/>
            <person name="Kojima M."/>
            <person name="Kondo S."/>
            <person name="Konno H."/>
            <person name="Nakano K."/>
            <person name="Ninomiya N."/>
            <person name="Nishio T."/>
            <person name="Okada M."/>
            <person name="Plessy C."/>
            <person name="Shibata K."/>
            <person name="Shiraki T."/>
            <person name="Suzuki S."/>
            <person name="Tagami M."/>
            <person name="Waki K."/>
            <person name="Watahiki A."/>
            <person name="Okamura-Oho Y."/>
            <person name="Suzuki H."/>
            <person name="Kawai J."/>
            <person name="Hayashizaki Y."/>
        </authorList>
    </citation>
    <scope>NUCLEOTIDE SEQUENCE [LARGE SCALE MRNA] (ISOFORM 2)</scope>
    <source>
        <strain>C57BL/6J</strain>
        <tissue>Hypothalamus</tissue>
    </source>
</reference>
<reference key="2">
    <citation type="journal article" date="2009" name="PLoS Biol.">
        <title>Lineage-specific biology revealed by a finished genome assembly of the mouse.</title>
        <authorList>
            <person name="Church D.M."/>
            <person name="Goodstadt L."/>
            <person name="Hillier L.W."/>
            <person name="Zody M.C."/>
            <person name="Goldstein S."/>
            <person name="She X."/>
            <person name="Bult C.J."/>
            <person name="Agarwala R."/>
            <person name="Cherry J.L."/>
            <person name="DiCuccio M."/>
            <person name="Hlavina W."/>
            <person name="Kapustin Y."/>
            <person name="Meric P."/>
            <person name="Maglott D."/>
            <person name="Birtle Z."/>
            <person name="Marques A.C."/>
            <person name="Graves T."/>
            <person name="Zhou S."/>
            <person name="Teague B."/>
            <person name="Potamousis K."/>
            <person name="Churas C."/>
            <person name="Place M."/>
            <person name="Herschleb J."/>
            <person name="Runnheim R."/>
            <person name="Forrest D."/>
            <person name="Amos-Landgraf J."/>
            <person name="Schwartz D.C."/>
            <person name="Cheng Z."/>
            <person name="Lindblad-Toh K."/>
            <person name="Eichler E.E."/>
            <person name="Ponting C.P."/>
        </authorList>
    </citation>
    <scope>NUCLEOTIDE SEQUENCE [LARGE SCALE GENOMIC DNA]</scope>
    <source>
        <strain>C57BL/6J</strain>
    </source>
</reference>
<reference key="3">
    <citation type="journal article" date="2004" name="Genome Res.">
        <title>The status, quality, and expansion of the NIH full-length cDNA project: the Mammalian Gene Collection (MGC).</title>
        <authorList>
            <consortium name="The MGC Project Team"/>
        </authorList>
    </citation>
    <scope>NUCLEOTIDE SEQUENCE [LARGE SCALE MRNA] (ISOFORM 3)</scope>
    <source>
        <tissue>Eye</tissue>
    </source>
</reference>
<reference key="4">
    <citation type="journal article" date="2010" name="Cell">
        <title>A tissue-specific atlas of mouse protein phosphorylation and expression.</title>
        <authorList>
            <person name="Huttlin E.L."/>
            <person name="Jedrychowski M.P."/>
            <person name="Elias J.E."/>
            <person name="Goswami T."/>
            <person name="Rad R."/>
            <person name="Beausoleil S.A."/>
            <person name="Villen J."/>
            <person name="Haas W."/>
            <person name="Sowa M.E."/>
            <person name="Gygi S.P."/>
        </authorList>
    </citation>
    <scope>PHOSPHORYLATION [LARGE SCALE ANALYSIS] AT SER-594</scope>
    <scope>IDENTIFICATION BY MASS SPECTROMETRY [LARGE SCALE ANALYSIS]</scope>
    <source>
        <tissue>Brain</tissue>
    </source>
</reference>
<proteinExistence type="evidence at protein level"/>
<protein>
    <recommendedName>
        <fullName>Podocalyxin-like protein 2</fullName>
    </recommendedName>
    <alternativeName>
        <fullName>Endoglycan</fullName>
    </alternativeName>
</protein>
<evidence type="ECO:0000250" key="1">
    <source>
        <dbReference type="UniProtKB" id="Q9NZ53"/>
    </source>
</evidence>
<evidence type="ECO:0000255" key="2"/>
<evidence type="ECO:0000256" key="3">
    <source>
        <dbReference type="SAM" id="MobiDB-lite"/>
    </source>
</evidence>
<evidence type="ECO:0000303" key="4">
    <source>
    </source>
</evidence>
<evidence type="ECO:0000303" key="5">
    <source>
    </source>
</evidence>
<evidence type="ECO:0000305" key="6"/>
<evidence type="ECO:0007744" key="7">
    <source>
    </source>
</evidence>
<gene>
    <name type="primary">Podxl2</name>
</gene>
<accession>Q8CAE9</accession>
<accession>Q8CFW3</accession>
<keyword id="KW-0025">Alternative splicing</keyword>
<keyword id="KW-0130">Cell adhesion</keyword>
<keyword id="KW-1015">Disulfide bond</keyword>
<keyword id="KW-0325">Glycoprotein</keyword>
<keyword id="KW-0472">Membrane</keyword>
<keyword id="KW-0597">Phosphoprotein</keyword>
<keyword id="KW-0654">Proteoglycan</keyword>
<keyword id="KW-1185">Reference proteome</keyword>
<keyword id="KW-0730">Sialic acid</keyword>
<keyword id="KW-0732">Signal</keyword>
<keyword id="KW-0765">Sulfation</keyword>
<keyword id="KW-0812">Transmembrane</keyword>
<keyword id="KW-1133">Transmembrane helix</keyword>
<dbReference type="EMBL" id="AK038943">
    <property type="protein sequence ID" value="BAC30176.1"/>
    <property type="molecule type" value="mRNA"/>
</dbReference>
<dbReference type="EMBL" id="AC153923">
    <property type="status" value="NOT_ANNOTATED_CDS"/>
    <property type="molecule type" value="Genomic_DNA"/>
</dbReference>
<dbReference type="EMBL" id="BC033384">
    <property type="protein sequence ID" value="AAH33384.1"/>
    <property type="molecule type" value="mRNA"/>
</dbReference>
<dbReference type="CCDS" id="CCDS20340.1">
    <molecule id="Q8CAE9-3"/>
</dbReference>
<dbReference type="CCDS" id="CCDS85093.1">
    <molecule id="Q8CAE9-1"/>
</dbReference>
<dbReference type="RefSeq" id="NP_795947.3">
    <property type="nucleotide sequence ID" value="NM_176973.4"/>
</dbReference>
<dbReference type="BioGRID" id="235427">
    <property type="interactions" value="1"/>
</dbReference>
<dbReference type="FunCoup" id="Q8CAE9">
    <property type="interactions" value="173"/>
</dbReference>
<dbReference type="IntAct" id="Q8CAE9">
    <property type="interactions" value="1"/>
</dbReference>
<dbReference type="MINT" id="Q8CAE9"/>
<dbReference type="STRING" id="10090.ENSMUSP00000117954"/>
<dbReference type="GlyCosmos" id="Q8CAE9">
    <property type="glycosylation" value="3 sites, No reported glycans"/>
</dbReference>
<dbReference type="GlyGen" id="Q8CAE9">
    <property type="glycosylation" value="6 sites, 4 N-linked glycans (2 sites)"/>
</dbReference>
<dbReference type="iPTMnet" id="Q8CAE9"/>
<dbReference type="PhosphoSitePlus" id="Q8CAE9"/>
<dbReference type="PaxDb" id="10090-ENSMUSP00000040417"/>
<dbReference type="ProteomicsDB" id="288116">
    <molecule id="Q8CAE9-1"/>
</dbReference>
<dbReference type="ProteomicsDB" id="288118">
    <molecule id="Q8CAE9-3"/>
</dbReference>
<dbReference type="DNASU" id="319655"/>
<dbReference type="GeneID" id="319655"/>
<dbReference type="KEGG" id="mmu:319655"/>
<dbReference type="UCSC" id="uc009cvw.1">
    <molecule id="Q8CAE9-2"/>
    <property type="organism name" value="mouse"/>
</dbReference>
<dbReference type="AGR" id="MGI:2442488"/>
<dbReference type="CTD" id="50512"/>
<dbReference type="MGI" id="MGI:2442488">
    <property type="gene designation" value="Podxl2"/>
</dbReference>
<dbReference type="eggNOG" id="ENOG502QTNA">
    <property type="taxonomic scope" value="Eukaryota"/>
</dbReference>
<dbReference type="InParanoid" id="Q8CAE9"/>
<dbReference type="OrthoDB" id="6352820at2759"/>
<dbReference type="PhylomeDB" id="Q8CAE9"/>
<dbReference type="Reactome" id="R-MMU-156584">
    <property type="pathway name" value="Cytosolic sulfonation of small molecules"/>
</dbReference>
<dbReference type="BioGRID-ORCS" id="319655">
    <property type="hits" value="3 hits in 80 CRISPR screens"/>
</dbReference>
<dbReference type="ChiTaRS" id="Podxl2">
    <property type="organism name" value="mouse"/>
</dbReference>
<dbReference type="PRO" id="PR:Q8CAE9"/>
<dbReference type="Proteomes" id="UP000000589">
    <property type="component" value="Unplaced"/>
</dbReference>
<dbReference type="RNAct" id="Q8CAE9">
    <property type="molecule type" value="protein"/>
</dbReference>
<dbReference type="GO" id="GO:0005886">
    <property type="term" value="C:plasma membrane"/>
    <property type="evidence" value="ECO:0007669"/>
    <property type="project" value="UniProtKB-ARBA"/>
</dbReference>
<dbReference type="GO" id="GO:0050901">
    <property type="term" value="P:leukocyte tethering or rolling"/>
    <property type="evidence" value="ECO:0000250"/>
    <property type="project" value="UniProtKB"/>
</dbReference>
<dbReference type="InterPro" id="IPR013836">
    <property type="entry name" value="CD34/Podocalyxin"/>
</dbReference>
<dbReference type="InterPro" id="IPR042397">
    <property type="entry name" value="PODXL2"/>
</dbReference>
<dbReference type="PANTHER" id="PTHR15594">
    <property type="entry name" value="PODOCALYXIN-LIKE PROTEIN 2"/>
    <property type="match status" value="1"/>
</dbReference>
<dbReference type="PANTHER" id="PTHR15594:SF1">
    <property type="entry name" value="PODOCALYXIN-LIKE PROTEIN 2"/>
    <property type="match status" value="1"/>
</dbReference>
<dbReference type="Pfam" id="PF06365">
    <property type="entry name" value="CD34_antigen"/>
    <property type="match status" value="1"/>
</dbReference>
<feature type="signal peptide" evidence="2">
    <location>
        <begin position="1"/>
        <end position="28"/>
    </location>
</feature>
<feature type="chain" id="PRO_0000252130" description="Podocalyxin-like protein 2">
    <location>
        <begin position="29"/>
        <end position="603"/>
    </location>
</feature>
<feature type="topological domain" description="Extracellular" evidence="2">
    <location>
        <begin position="29"/>
        <end position="499"/>
    </location>
</feature>
<feature type="transmembrane region" description="Helical" evidence="2">
    <location>
        <begin position="500"/>
        <end position="520"/>
    </location>
</feature>
<feature type="topological domain" description="Cytoplasmic" evidence="2">
    <location>
        <begin position="521"/>
        <end position="603"/>
    </location>
</feature>
<feature type="region of interest" description="Disordered" evidence="3">
    <location>
        <begin position="53"/>
        <end position="92"/>
    </location>
</feature>
<feature type="region of interest" description="Disordered" evidence="3">
    <location>
        <begin position="124"/>
        <end position="368"/>
    </location>
</feature>
<feature type="region of interest" description="Disordered" evidence="3">
    <location>
        <begin position="558"/>
        <end position="603"/>
    </location>
</feature>
<feature type="compositionally biased region" description="Acidic residues" evidence="3">
    <location>
        <begin position="156"/>
        <end position="187"/>
    </location>
</feature>
<feature type="compositionally biased region" description="Low complexity" evidence="3">
    <location>
        <begin position="196"/>
        <end position="216"/>
    </location>
</feature>
<feature type="compositionally biased region" description="Polar residues" evidence="3">
    <location>
        <begin position="240"/>
        <end position="266"/>
    </location>
</feature>
<feature type="compositionally biased region" description="Polar residues" evidence="3">
    <location>
        <begin position="302"/>
        <end position="314"/>
    </location>
</feature>
<feature type="compositionally biased region" description="Polar residues" evidence="3">
    <location>
        <begin position="339"/>
        <end position="349"/>
    </location>
</feature>
<feature type="compositionally biased region" description="Polar residues" evidence="3">
    <location>
        <begin position="558"/>
        <end position="570"/>
    </location>
</feature>
<feature type="compositionally biased region" description="Acidic residues" evidence="3">
    <location>
        <begin position="592"/>
        <end position="603"/>
    </location>
</feature>
<feature type="modified residue" description="Sulfotyrosine" evidence="1">
    <location>
        <position position="93"/>
    </location>
</feature>
<feature type="modified residue" description="Sulfotyrosine" evidence="1">
    <location>
        <position position="113"/>
    </location>
</feature>
<feature type="modified residue" description="Phosphoserine" evidence="1">
    <location>
        <position position="569"/>
    </location>
</feature>
<feature type="modified residue" description="Phosphoserine" evidence="7">
    <location>
        <position position="594"/>
    </location>
</feature>
<feature type="glycosylation site" description="O-linked (Xyl...) (chondroitin sulfate) serine" evidence="1">
    <location>
        <position position="75"/>
    </location>
</feature>
<feature type="glycosylation site" description="N-linked (GlcNAc...) asparagine" evidence="2">
    <location>
        <position position="101"/>
    </location>
</feature>
<feature type="glycosylation site" description="N-linked (GlcNAc...) asparagine" evidence="2">
    <location>
        <position position="260"/>
    </location>
</feature>
<feature type="glycosylation site" description="N-linked (GlcNAc...) asparagine" evidence="2">
    <location>
        <position position="394"/>
    </location>
</feature>
<feature type="splice variant" id="VSP_020877" description="In isoform 3." evidence="4">
    <location>
        <begin position="1"/>
        <end position="64"/>
    </location>
</feature>
<feature type="splice variant" id="VSP_020878" description="In isoform 2." evidence="5">
    <original>DYVFPDLTEKVASMEDPGQA</original>
    <variation>GSSAHLPLHRISGVIHGEGP</variation>
    <location>
        <begin position="112"/>
        <end position="131"/>
    </location>
</feature>
<feature type="splice variant" id="VSP_020879" description="In isoform 2." evidence="5">
    <location>
        <begin position="132"/>
        <end position="603"/>
    </location>
</feature>